<gene>
    <name evidence="1" type="primary">rsmH</name>
    <name type="synonym">mraW</name>
    <name type="ordered locus">Sputw3181_0382</name>
</gene>
<keyword id="KW-0963">Cytoplasm</keyword>
<keyword id="KW-0489">Methyltransferase</keyword>
<keyword id="KW-0698">rRNA processing</keyword>
<keyword id="KW-0949">S-adenosyl-L-methionine</keyword>
<keyword id="KW-0808">Transferase</keyword>
<evidence type="ECO:0000255" key="1">
    <source>
        <dbReference type="HAMAP-Rule" id="MF_01007"/>
    </source>
</evidence>
<name>RSMH_SHESW</name>
<organism>
    <name type="scientific">Shewanella sp. (strain W3-18-1)</name>
    <dbReference type="NCBI Taxonomy" id="351745"/>
    <lineage>
        <taxon>Bacteria</taxon>
        <taxon>Pseudomonadati</taxon>
        <taxon>Pseudomonadota</taxon>
        <taxon>Gammaproteobacteria</taxon>
        <taxon>Alteromonadales</taxon>
        <taxon>Shewanellaceae</taxon>
        <taxon>Shewanella</taxon>
    </lineage>
</organism>
<sequence>MSQEFAHLSVLLAETVGGLNIKDDGIYIDGTFGRGGHSRQILQRLGDNGRLIAIDRDPQAIEAAKQFSDDPRFQIVHGGFGQLADYVEDLGLVGKIDGVLLDLGVSSPQLDDAERGFSFLRDGPLDMRMDNSQGQTAAQWLAHAEIEDMAWVFKTYGEEKNARHIARCIAADRDKTPFLRTKDLADLIARITKNKERNKHPATRVFQAIRIYINSELDQIDQALEGALAVLAPQGRLSIISFHSLEDRIVKRFIRRHSQGESVPYGLPITEDQINKSRKLRAIGKAIMPSDEEIERNARARSSVLRIAERLDY</sequence>
<proteinExistence type="inferred from homology"/>
<accession>A1REY8</accession>
<comment type="function">
    <text evidence="1">Specifically methylates the N4 position of cytidine in position 1402 (C1402) of 16S rRNA.</text>
</comment>
<comment type="catalytic activity">
    <reaction evidence="1">
        <text>cytidine(1402) in 16S rRNA + S-adenosyl-L-methionine = N(4)-methylcytidine(1402) in 16S rRNA + S-adenosyl-L-homocysteine + H(+)</text>
        <dbReference type="Rhea" id="RHEA:42928"/>
        <dbReference type="Rhea" id="RHEA-COMP:10286"/>
        <dbReference type="Rhea" id="RHEA-COMP:10287"/>
        <dbReference type="ChEBI" id="CHEBI:15378"/>
        <dbReference type="ChEBI" id="CHEBI:57856"/>
        <dbReference type="ChEBI" id="CHEBI:59789"/>
        <dbReference type="ChEBI" id="CHEBI:74506"/>
        <dbReference type="ChEBI" id="CHEBI:82748"/>
        <dbReference type="EC" id="2.1.1.199"/>
    </reaction>
</comment>
<comment type="subcellular location">
    <subcellularLocation>
        <location evidence="1">Cytoplasm</location>
    </subcellularLocation>
</comment>
<comment type="similarity">
    <text evidence="1">Belongs to the methyltransferase superfamily. RsmH family.</text>
</comment>
<protein>
    <recommendedName>
        <fullName evidence="1">Ribosomal RNA small subunit methyltransferase H</fullName>
        <ecNumber evidence="1">2.1.1.199</ecNumber>
    </recommendedName>
    <alternativeName>
        <fullName evidence="1">16S rRNA m(4)C1402 methyltransferase</fullName>
    </alternativeName>
    <alternativeName>
        <fullName evidence="1">rRNA (cytosine-N(4)-)-methyltransferase RsmH</fullName>
    </alternativeName>
</protein>
<reference key="1">
    <citation type="submission" date="2006-12" db="EMBL/GenBank/DDBJ databases">
        <title>Complete sequence of Shewanella sp. W3-18-1.</title>
        <authorList>
            <consortium name="US DOE Joint Genome Institute"/>
            <person name="Copeland A."/>
            <person name="Lucas S."/>
            <person name="Lapidus A."/>
            <person name="Barry K."/>
            <person name="Detter J.C."/>
            <person name="Glavina del Rio T."/>
            <person name="Hammon N."/>
            <person name="Israni S."/>
            <person name="Dalin E."/>
            <person name="Tice H."/>
            <person name="Pitluck S."/>
            <person name="Chain P."/>
            <person name="Malfatti S."/>
            <person name="Shin M."/>
            <person name="Vergez L."/>
            <person name="Schmutz J."/>
            <person name="Larimer F."/>
            <person name="Land M."/>
            <person name="Hauser L."/>
            <person name="Kyrpides N."/>
            <person name="Lykidis A."/>
            <person name="Tiedje J."/>
            <person name="Richardson P."/>
        </authorList>
    </citation>
    <scope>NUCLEOTIDE SEQUENCE [LARGE SCALE GENOMIC DNA]</scope>
    <source>
        <strain>W3-18-1</strain>
    </source>
</reference>
<feature type="chain" id="PRO_0000387125" description="Ribosomal RNA small subunit methyltransferase H">
    <location>
        <begin position="1"/>
        <end position="313"/>
    </location>
</feature>
<feature type="binding site" evidence="1">
    <location>
        <begin position="35"/>
        <end position="37"/>
    </location>
    <ligand>
        <name>S-adenosyl-L-methionine</name>
        <dbReference type="ChEBI" id="CHEBI:59789"/>
    </ligand>
</feature>
<feature type="binding site" evidence="1">
    <location>
        <position position="55"/>
    </location>
    <ligand>
        <name>S-adenosyl-L-methionine</name>
        <dbReference type="ChEBI" id="CHEBI:59789"/>
    </ligand>
</feature>
<feature type="binding site" evidence="1">
    <location>
        <position position="80"/>
    </location>
    <ligand>
        <name>S-adenosyl-L-methionine</name>
        <dbReference type="ChEBI" id="CHEBI:59789"/>
    </ligand>
</feature>
<feature type="binding site" evidence="1">
    <location>
        <position position="102"/>
    </location>
    <ligand>
        <name>S-adenosyl-L-methionine</name>
        <dbReference type="ChEBI" id="CHEBI:59789"/>
    </ligand>
</feature>
<feature type="binding site" evidence="1">
    <location>
        <position position="109"/>
    </location>
    <ligand>
        <name>S-adenosyl-L-methionine</name>
        <dbReference type="ChEBI" id="CHEBI:59789"/>
    </ligand>
</feature>
<dbReference type="EC" id="2.1.1.199" evidence="1"/>
<dbReference type="EMBL" id="CP000503">
    <property type="protein sequence ID" value="ABM23233.1"/>
    <property type="molecule type" value="Genomic_DNA"/>
</dbReference>
<dbReference type="RefSeq" id="WP_011787776.1">
    <property type="nucleotide sequence ID" value="NC_008750.1"/>
</dbReference>
<dbReference type="SMR" id="A1REY8"/>
<dbReference type="KEGG" id="shw:Sputw3181_0382"/>
<dbReference type="HOGENOM" id="CLU_038422_2_0_6"/>
<dbReference type="Proteomes" id="UP000002597">
    <property type="component" value="Chromosome"/>
</dbReference>
<dbReference type="GO" id="GO:0005737">
    <property type="term" value="C:cytoplasm"/>
    <property type="evidence" value="ECO:0007669"/>
    <property type="project" value="UniProtKB-SubCell"/>
</dbReference>
<dbReference type="GO" id="GO:0071424">
    <property type="term" value="F:rRNA (cytosine-N4-)-methyltransferase activity"/>
    <property type="evidence" value="ECO:0007669"/>
    <property type="project" value="UniProtKB-UniRule"/>
</dbReference>
<dbReference type="GO" id="GO:0070475">
    <property type="term" value="P:rRNA base methylation"/>
    <property type="evidence" value="ECO:0007669"/>
    <property type="project" value="UniProtKB-UniRule"/>
</dbReference>
<dbReference type="FunFam" id="1.10.150.170:FF:000001">
    <property type="entry name" value="Ribosomal RNA small subunit methyltransferase H"/>
    <property type="match status" value="1"/>
</dbReference>
<dbReference type="Gene3D" id="1.10.150.170">
    <property type="entry name" value="Putative methyltransferase TM0872, insert domain"/>
    <property type="match status" value="1"/>
</dbReference>
<dbReference type="Gene3D" id="3.40.50.150">
    <property type="entry name" value="Vaccinia Virus protein VP39"/>
    <property type="match status" value="1"/>
</dbReference>
<dbReference type="HAMAP" id="MF_01007">
    <property type="entry name" value="16SrRNA_methyltr_H"/>
    <property type="match status" value="1"/>
</dbReference>
<dbReference type="InterPro" id="IPR002903">
    <property type="entry name" value="RsmH"/>
</dbReference>
<dbReference type="InterPro" id="IPR023397">
    <property type="entry name" value="SAM-dep_MeTrfase_MraW_recog"/>
</dbReference>
<dbReference type="InterPro" id="IPR029063">
    <property type="entry name" value="SAM-dependent_MTases_sf"/>
</dbReference>
<dbReference type="NCBIfam" id="TIGR00006">
    <property type="entry name" value="16S rRNA (cytosine(1402)-N(4))-methyltransferase RsmH"/>
    <property type="match status" value="1"/>
</dbReference>
<dbReference type="PANTHER" id="PTHR11265:SF0">
    <property type="entry name" value="12S RRNA N4-METHYLCYTIDINE METHYLTRANSFERASE"/>
    <property type="match status" value="1"/>
</dbReference>
<dbReference type="PANTHER" id="PTHR11265">
    <property type="entry name" value="S-ADENOSYL-METHYLTRANSFERASE MRAW"/>
    <property type="match status" value="1"/>
</dbReference>
<dbReference type="Pfam" id="PF01795">
    <property type="entry name" value="Methyltransf_5"/>
    <property type="match status" value="1"/>
</dbReference>
<dbReference type="PIRSF" id="PIRSF004486">
    <property type="entry name" value="MraW"/>
    <property type="match status" value="1"/>
</dbReference>
<dbReference type="SUPFAM" id="SSF81799">
    <property type="entry name" value="Putative methyltransferase TM0872, insert domain"/>
    <property type="match status" value="1"/>
</dbReference>
<dbReference type="SUPFAM" id="SSF53335">
    <property type="entry name" value="S-adenosyl-L-methionine-dependent methyltransferases"/>
    <property type="match status" value="1"/>
</dbReference>